<name>CARB_CLOBJ</name>
<keyword id="KW-0028">Amino-acid biosynthesis</keyword>
<keyword id="KW-0055">Arginine biosynthesis</keyword>
<keyword id="KW-0067">ATP-binding</keyword>
<keyword id="KW-0436">Ligase</keyword>
<keyword id="KW-0460">Magnesium</keyword>
<keyword id="KW-0464">Manganese</keyword>
<keyword id="KW-0479">Metal-binding</keyword>
<keyword id="KW-0547">Nucleotide-binding</keyword>
<keyword id="KW-0665">Pyrimidine biosynthesis</keyword>
<keyword id="KW-0677">Repeat</keyword>
<dbReference type="EC" id="6.3.4.16" evidence="1"/>
<dbReference type="EC" id="6.3.5.5" evidence="1"/>
<dbReference type="EMBL" id="CP001581">
    <property type="protein sequence ID" value="ACO83513.1"/>
    <property type="molecule type" value="Genomic_DNA"/>
</dbReference>
<dbReference type="RefSeq" id="WP_012703727.1">
    <property type="nucleotide sequence ID" value="NC_012563.1"/>
</dbReference>
<dbReference type="SMR" id="C1FNY3"/>
<dbReference type="KEGG" id="cby:CLM_2001"/>
<dbReference type="eggNOG" id="COG0458">
    <property type="taxonomic scope" value="Bacteria"/>
</dbReference>
<dbReference type="HOGENOM" id="CLU_000513_1_2_9"/>
<dbReference type="UniPathway" id="UPA00068">
    <property type="reaction ID" value="UER00171"/>
</dbReference>
<dbReference type="UniPathway" id="UPA00070">
    <property type="reaction ID" value="UER00115"/>
</dbReference>
<dbReference type="Proteomes" id="UP000001374">
    <property type="component" value="Chromosome"/>
</dbReference>
<dbReference type="GO" id="GO:0005737">
    <property type="term" value="C:cytoplasm"/>
    <property type="evidence" value="ECO:0007669"/>
    <property type="project" value="TreeGrafter"/>
</dbReference>
<dbReference type="GO" id="GO:0005524">
    <property type="term" value="F:ATP binding"/>
    <property type="evidence" value="ECO:0007669"/>
    <property type="project" value="UniProtKB-UniRule"/>
</dbReference>
<dbReference type="GO" id="GO:0004087">
    <property type="term" value="F:carbamoyl-phosphate synthase (ammonia) activity"/>
    <property type="evidence" value="ECO:0007669"/>
    <property type="project" value="RHEA"/>
</dbReference>
<dbReference type="GO" id="GO:0004088">
    <property type="term" value="F:carbamoyl-phosphate synthase (glutamine-hydrolyzing) activity"/>
    <property type="evidence" value="ECO:0007669"/>
    <property type="project" value="UniProtKB-UniRule"/>
</dbReference>
<dbReference type="GO" id="GO:0046872">
    <property type="term" value="F:metal ion binding"/>
    <property type="evidence" value="ECO:0007669"/>
    <property type="project" value="UniProtKB-KW"/>
</dbReference>
<dbReference type="GO" id="GO:0044205">
    <property type="term" value="P:'de novo' UMP biosynthetic process"/>
    <property type="evidence" value="ECO:0007669"/>
    <property type="project" value="UniProtKB-UniRule"/>
</dbReference>
<dbReference type="GO" id="GO:0006541">
    <property type="term" value="P:glutamine metabolic process"/>
    <property type="evidence" value="ECO:0007669"/>
    <property type="project" value="TreeGrafter"/>
</dbReference>
<dbReference type="GO" id="GO:0006526">
    <property type="term" value="P:L-arginine biosynthetic process"/>
    <property type="evidence" value="ECO:0007669"/>
    <property type="project" value="UniProtKB-UniRule"/>
</dbReference>
<dbReference type="CDD" id="cd01424">
    <property type="entry name" value="MGS_CPS_II"/>
    <property type="match status" value="1"/>
</dbReference>
<dbReference type="FunFam" id="1.10.1030.10:FF:000002">
    <property type="entry name" value="Carbamoyl-phosphate synthase large chain"/>
    <property type="match status" value="1"/>
</dbReference>
<dbReference type="FunFam" id="3.30.470.20:FF:000001">
    <property type="entry name" value="Carbamoyl-phosphate synthase large chain"/>
    <property type="match status" value="1"/>
</dbReference>
<dbReference type="FunFam" id="3.30.470.20:FF:000026">
    <property type="entry name" value="Carbamoyl-phosphate synthase large chain"/>
    <property type="match status" value="1"/>
</dbReference>
<dbReference type="FunFam" id="3.40.50.20:FF:000001">
    <property type="entry name" value="Carbamoyl-phosphate synthase large chain"/>
    <property type="match status" value="1"/>
</dbReference>
<dbReference type="FunFam" id="3.40.50.20:FF:000002">
    <property type="entry name" value="Carbamoyl-phosphate synthase large chain"/>
    <property type="match status" value="1"/>
</dbReference>
<dbReference type="Gene3D" id="3.40.50.20">
    <property type="match status" value="2"/>
</dbReference>
<dbReference type="Gene3D" id="3.30.1490.20">
    <property type="entry name" value="ATP-grasp fold, A domain"/>
    <property type="match status" value="1"/>
</dbReference>
<dbReference type="Gene3D" id="3.30.470.20">
    <property type="entry name" value="ATP-grasp fold, B domain"/>
    <property type="match status" value="2"/>
</dbReference>
<dbReference type="Gene3D" id="1.10.1030.10">
    <property type="entry name" value="Carbamoyl-phosphate synthetase, large subunit oligomerisation domain"/>
    <property type="match status" value="1"/>
</dbReference>
<dbReference type="Gene3D" id="3.40.50.1380">
    <property type="entry name" value="Methylglyoxal synthase-like domain"/>
    <property type="match status" value="1"/>
</dbReference>
<dbReference type="HAMAP" id="MF_01210_A">
    <property type="entry name" value="CPSase_L_chain_A"/>
    <property type="match status" value="1"/>
</dbReference>
<dbReference type="HAMAP" id="MF_01210_B">
    <property type="entry name" value="CPSase_L_chain_B"/>
    <property type="match status" value="1"/>
</dbReference>
<dbReference type="InterPro" id="IPR011761">
    <property type="entry name" value="ATP-grasp"/>
</dbReference>
<dbReference type="InterPro" id="IPR013815">
    <property type="entry name" value="ATP_grasp_subdomain_1"/>
</dbReference>
<dbReference type="InterPro" id="IPR006275">
    <property type="entry name" value="CarbamoylP_synth_lsu"/>
</dbReference>
<dbReference type="InterPro" id="IPR005480">
    <property type="entry name" value="CarbamoylP_synth_lsu_oligo"/>
</dbReference>
<dbReference type="InterPro" id="IPR036897">
    <property type="entry name" value="CarbamoylP_synth_lsu_oligo_sf"/>
</dbReference>
<dbReference type="InterPro" id="IPR005479">
    <property type="entry name" value="CbamoylP_synth_lsu-like_ATP-bd"/>
</dbReference>
<dbReference type="InterPro" id="IPR005483">
    <property type="entry name" value="CbamoylP_synth_lsu_CPSase_dom"/>
</dbReference>
<dbReference type="InterPro" id="IPR011607">
    <property type="entry name" value="MGS-like_dom"/>
</dbReference>
<dbReference type="InterPro" id="IPR036914">
    <property type="entry name" value="MGS-like_dom_sf"/>
</dbReference>
<dbReference type="InterPro" id="IPR033937">
    <property type="entry name" value="MGS_CPS_CarB"/>
</dbReference>
<dbReference type="InterPro" id="IPR016185">
    <property type="entry name" value="PreATP-grasp_dom_sf"/>
</dbReference>
<dbReference type="NCBIfam" id="TIGR01369">
    <property type="entry name" value="CPSaseII_lrg"/>
    <property type="match status" value="1"/>
</dbReference>
<dbReference type="NCBIfam" id="NF003671">
    <property type="entry name" value="PRK05294.1"/>
    <property type="match status" value="1"/>
</dbReference>
<dbReference type="NCBIfam" id="NF009455">
    <property type="entry name" value="PRK12815.1"/>
    <property type="match status" value="1"/>
</dbReference>
<dbReference type="PANTHER" id="PTHR11405:SF53">
    <property type="entry name" value="CARBAMOYL-PHOSPHATE SYNTHASE [AMMONIA], MITOCHONDRIAL"/>
    <property type="match status" value="1"/>
</dbReference>
<dbReference type="PANTHER" id="PTHR11405">
    <property type="entry name" value="CARBAMOYLTRANSFERASE FAMILY MEMBER"/>
    <property type="match status" value="1"/>
</dbReference>
<dbReference type="Pfam" id="PF02786">
    <property type="entry name" value="CPSase_L_D2"/>
    <property type="match status" value="2"/>
</dbReference>
<dbReference type="Pfam" id="PF02787">
    <property type="entry name" value="CPSase_L_D3"/>
    <property type="match status" value="1"/>
</dbReference>
<dbReference type="Pfam" id="PF02142">
    <property type="entry name" value="MGS"/>
    <property type="match status" value="1"/>
</dbReference>
<dbReference type="PRINTS" id="PR00098">
    <property type="entry name" value="CPSASE"/>
</dbReference>
<dbReference type="SMART" id="SM01096">
    <property type="entry name" value="CPSase_L_D3"/>
    <property type="match status" value="1"/>
</dbReference>
<dbReference type="SMART" id="SM00851">
    <property type="entry name" value="MGS"/>
    <property type="match status" value="1"/>
</dbReference>
<dbReference type="SUPFAM" id="SSF48108">
    <property type="entry name" value="Carbamoyl phosphate synthetase, large subunit connection domain"/>
    <property type="match status" value="1"/>
</dbReference>
<dbReference type="SUPFAM" id="SSF56059">
    <property type="entry name" value="Glutathione synthetase ATP-binding domain-like"/>
    <property type="match status" value="2"/>
</dbReference>
<dbReference type="SUPFAM" id="SSF52335">
    <property type="entry name" value="Methylglyoxal synthase-like"/>
    <property type="match status" value="1"/>
</dbReference>
<dbReference type="SUPFAM" id="SSF52440">
    <property type="entry name" value="PreATP-grasp domain"/>
    <property type="match status" value="2"/>
</dbReference>
<dbReference type="PROSITE" id="PS50975">
    <property type="entry name" value="ATP_GRASP"/>
    <property type="match status" value="2"/>
</dbReference>
<dbReference type="PROSITE" id="PS00866">
    <property type="entry name" value="CPSASE_1"/>
    <property type="match status" value="2"/>
</dbReference>
<dbReference type="PROSITE" id="PS00867">
    <property type="entry name" value="CPSASE_2"/>
    <property type="match status" value="2"/>
</dbReference>
<dbReference type="PROSITE" id="PS51855">
    <property type="entry name" value="MGS"/>
    <property type="match status" value="1"/>
</dbReference>
<gene>
    <name evidence="1" type="primary">carB</name>
    <name type="ordered locus">CLM_2001</name>
</gene>
<reference key="1">
    <citation type="submission" date="2008-10" db="EMBL/GenBank/DDBJ databases">
        <title>Genome sequence of Clostridium botulinum A2 Kyoto.</title>
        <authorList>
            <person name="Shrivastava S."/>
            <person name="Brinkac L.M."/>
            <person name="Brown J.L."/>
            <person name="Bruce D."/>
            <person name="Detter C.C."/>
            <person name="Johnson E.A."/>
            <person name="Munk C.A."/>
            <person name="Smith L.A."/>
            <person name="Smith T.J."/>
            <person name="Sutton G."/>
            <person name="Brettin T.S."/>
        </authorList>
    </citation>
    <scope>NUCLEOTIDE SEQUENCE [LARGE SCALE GENOMIC DNA]</scope>
    <source>
        <strain>Kyoto / Type A2</strain>
    </source>
</reference>
<protein>
    <recommendedName>
        <fullName evidence="1">Carbamoyl phosphate synthase large chain</fullName>
        <ecNumber evidence="1">6.3.4.16</ecNumber>
        <ecNumber evidence="1">6.3.5.5</ecNumber>
    </recommendedName>
    <alternativeName>
        <fullName evidence="1">Carbamoyl phosphate synthetase ammonia chain</fullName>
    </alternativeName>
</protein>
<sequence>MPLNKDIKKVLVIGSGPIVIGQAAEFDYSGTQACEGLKEEGVEVVLINSNPATIMTDKKVADKVYLEPLTVEFVEKVIAKERPDSLLAGMGGQTGLNLAVELYDKGILKKYGVNVIGTSIESIKEGEDRELFRNVMSRINGPVIQSEIVTDMENGKAFANKIGYPIIVRPAYTLGGTGGGIAESEEELDEILALGLQLSSIGQVLLEKSVKGWKEIEYEVMRDSRGNCITVCNMENIDPVGIHTGDSIVVAPSQTLSDKEYQMLRSASINILNSIGIKGGCNVQFALNPNSFEYAVIEINPRVSRSSALASKATGYPIAKVASKIALGYTLDEIKNAVTQKTYACFEPSLDYVVVKIPKWPFDKFQGADRVLGTKMMATGEIMAIGSNFEAAFLKGTRSLEIGKYSLEHKKFRELSIEELKTRVISPDDERIFALAEMLRRDYRMDKVAEITGIDKFFIKKFRWIVEEEQRLRLSKIDDLDKEWLYKLKKKGFSDKGIADMLKVNPEDIYRLRNIWRINPVYKMVDTCGGEFEALSPYYYSTYDVYDEVEVSKNKKVIVIGSGPIRIGQGIEFDYASVHCVKALKKLGIETIIVNNNPETVSTDFDVSDKLYFEPLTEEDVLNIVEKEKPDGVILQFGGQTAIKLANFLKEKNISTLGTTADQIDMAEDREKFDELLEKLKIARPKGKGIWSVEDGLEEAKKLGFPVLVRPSYVLGGQGMEITHDEKELVYYLSNAFQKDKKNPILIDKYLMGREIEVDAISDGEDVLIPGIMEHLERAGVHSGDSITMYPTQNVSKDIKEKILEYTKKLALGIGIKGMINIQFIEFQGNLYVIEVNPRASRTVPYISKVSKVPIVDIATRVMLGEKLNDLGYGVGVYKEPELISVKVPVFSTQKLPRVEVCLGPEMKSTGEVLGVGKTLEEALYKGFIGANMSIKKEKGTVLATINDHDKEEFLPIAKKLHSLGYKFIATSKTAELLKEEGIEVKQVRKLKEESPNIIDTIKNDEVDLVVNTPTKGNDSKRDGFHIRRAAIERNLGVITSLDTLKAIVDIKFKEIKDETLYIFDLSN</sequence>
<organism>
    <name type="scientific">Clostridium botulinum (strain Kyoto / Type A2)</name>
    <dbReference type="NCBI Taxonomy" id="536232"/>
    <lineage>
        <taxon>Bacteria</taxon>
        <taxon>Bacillati</taxon>
        <taxon>Bacillota</taxon>
        <taxon>Clostridia</taxon>
        <taxon>Eubacteriales</taxon>
        <taxon>Clostridiaceae</taxon>
        <taxon>Clostridium</taxon>
    </lineage>
</organism>
<feature type="chain" id="PRO_1000164709" description="Carbamoyl phosphate synthase large chain">
    <location>
        <begin position="1"/>
        <end position="1068"/>
    </location>
</feature>
<feature type="domain" description="ATP-grasp 1" evidence="1">
    <location>
        <begin position="133"/>
        <end position="327"/>
    </location>
</feature>
<feature type="domain" description="ATP-grasp 2" evidence="1">
    <location>
        <begin position="674"/>
        <end position="864"/>
    </location>
</feature>
<feature type="domain" description="MGS-like" evidence="1">
    <location>
        <begin position="933"/>
        <end position="1068"/>
    </location>
</feature>
<feature type="region of interest" description="Carboxyphosphate synthetic domain" evidence="1">
    <location>
        <begin position="1"/>
        <end position="401"/>
    </location>
</feature>
<feature type="region of interest" description="Oligomerization domain" evidence="1">
    <location>
        <begin position="402"/>
        <end position="549"/>
    </location>
</feature>
<feature type="region of interest" description="Carbamoyl phosphate synthetic domain" evidence="1">
    <location>
        <begin position="550"/>
        <end position="932"/>
    </location>
</feature>
<feature type="region of interest" description="Allosteric domain" evidence="1">
    <location>
        <begin position="933"/>
        <end position="1068"/>
    </location>
</feature>
<feature type="binding site" evidence="1">
    <location>
        <position position="129"/>
    </location>
    <ligand>
        <name>ATP</name>
        <dbReference type="ChEBI" id="CHEBI:30616"/>
        <label>1</label>
    </ligand>
</feature>
<feature type="binding site" evidence="1">
    <location>
        <position position="169"/>
    </location>
    <ligand>
        <name>ATP</name>
        <dbReference type="ChEBI" id="CHEBI:30616"/>
        <label>1</label>
    </ligand>
</feature>
<feature type="binding site" evidence="1">
    <location>
        <position position="175"/>
    </location>
    <ligand>
        <name>ATP</name>
        <dbReference type="ChEBI" id="CHEBI:30616"/>
        <label>1</label>
    </ligand>
</feature>
<feature type="binding site" evidence="1">
    <location>
        <position position="176"/>
    </location>
    <ligand>
        <name>ATP</name>
        <dbReference type="ChEBI" id="CHEBI:30616"/>
        <label>1</label>
    </ligand>
</feature>
<feature type="binding site" evidence="1">
    <location>
        <position position="208"/>
    </location>
    <ligand>
        <name>ATP</name>
        <dbReference type="ChEBI" id="CHEBI:30616"/>
        <label>1</label>
    </ligand>
</feature>
<feature type="binding site" evidence="1">
    <location>
        <position position="210"/>
    </location>
    <ligand>
        <name>ATP</name>
        <dbReference type="ChEBI" id="CHEBI:30616"/>
        <label>1</label>
    </ligand>
</feature>
<feature type="binding site" evidence="1">
    <location>
        <position position="215"/>
    </location>
    <ligand>
        <name>ATP</name>
        <dbReference type="ChEBI" id="CHEBI:30616"/>
        <label>1</label>
    </ligand>
</feature>
<feature type="binding site" evidence="1">
    <location>
        <position position="241"/>
    </location>
    <ligand>
        <name>ATP</name>
        <dbReference type="ChEBI" id="CHEBI:30616"/>
        <label>1</label>
    </ligand>
</feature>
<feature type="binding site" evidence="1">
    <location>
        <position position="242"/>
    </location>
    <ligand>
        <name>ATP</name>
        <dbReference type="ChEBI" id="CHEBI:30616"/>
        <label>1</label>
    </ligand>
</feature>
<feature type="binding site" evidence="1">
    <location>
        <position position="243"/>
    </location>
    <ligand>
        <name>ATP</name>
        <dbReference type="ChEBI" id="CHEBI:30616"/>
        <label>1</label>
    </ligand>
</feature>
<feature type="binding site" evidence="1">
    <location>
        <position position="284"/>
    </location>
    <ligand>
        <name>ATP</name>
        <dbReference type="ChEBI" id="CHEBI:30616"/>
        <label>1</label>
    </ligand>
</feature>
<feature type="binding site" evidence="1">
    <location>
        <position position="284"/>
    </location>
    <ligand>
        <name>Mg(2+)</name>
        <dbReference type="ChEBI" id="CHEBI:18420"/>
        <label>1</label>
    </ligand>
</feature>
<feature type="binding site" evidence="1">
    <location>
        <position position="284"/>
    </location>
    <ligand>
        <name>Mn(2+)</name>
        <dbReference type="ChEBI" id="CHEBI:29035"/>
        <label>1</label>
    </ligand>
</feature>
<feature type="binding site" evidence="1">
    <location>
        <position position="298"/>
    </location>
    <ligand>
        <name>ATP</name>
        <dbReference type="ChEBI" id="CHEBI:30616"/>
        <label>1</label>
    </ligand>
</feature>
<feature type="binding site" evidence="1">
    <location>
        <position position="298"/>
    </location>
    <ligand>
        <name>Mg(2+)</name>
        <dbReference type="ChEBI" id="CHEBI:18420"/>
        <label>1</label>
    </ligand>
</feature>
<feature type="binding site" evidence="1">
    <location>
        <position position="298"/>
    </location>
    <ligand>
        <name>Mg(2+)</name>
        <dbReference type="ChEBI" id="CHEBI:18420"/>
        <label>2</label>
    </ligand>
</feature>
<feature type="binding site" evidence="1">
    <location>
        <position position="298"/>
    </location>
    <ligand>
        <name>Mn(2+)</name>
        <dbReference type="ChEBI" id="CHEBI:29035"/>
        <label>1</label>
    </ligand>
</feature>
<feature type="binding site" evidence="1">
    <location>
        <position position="298"/>
    </location>
    <ligand>
        <name>Mn(2+)</name>
        <dbReference type="ChEBI" id="CHEBI:29035"/>
        <label>2</label>
    </ligand>
</feature>
<feature type="binding site" evidence="1">
    <location>
        <position position="300"/>
    </location>
    <ligand>
        <name>Mg(2+)</name>
        <dbReference type="ChEBI" id="CHEBI:18420"/>
        <label>2</label>
    </ligand>
</feature>
<feature type="binding site" evidence="1">
    <location>
        <position position="300"/>
    </location>
    <ligand>
        <name>Mn(2+)</name>
        <dbReference type="ChEBI" id="CHEBI:29035"/>
        <label>2</label>
    </ligand>
</feature>
<feature type="binding site" evidence="1">
    <location>
        <position position="710"/>
    </location>
    <ligand>
        <name>ATP</name>
        <dbReference type="ChEBI" id="CHEBI:30616"/>
        <label>2</label>
    </ligand>
</feature>
<feature type="binding site" evidence="1">
    <location>
        <position position="749"/>
    </location>
    <ligand>
        <name>ATP</name>
        <dbReference type="ChEBI" id="CHEBI:30616"/>
        <label>2</label>
    </ligand>
</feature>
<feature type="binding site" evidence="1">
    <location>
        <position position="751"/>
    </location>
    <ligand>
        <name>ATP</name>
        <dbReference type="ChEBI" id="CHEBI:30616"/>
        <label>2</label>
    </ligand>
</feature>
<feature type="binding site" evidence="1">
    <location>
        <position position="755"/>
    </location>
    <ligand>
        <name>ATP</name>
        <dbReference type="ChEBI" id="CHEBI:30616"/>
        <label>2</label>
    </ligand>
</feature>
<feature type="binding site" evidence="1">
    <location>
        <position position="780"/>
    </location>
    <ligand>
        <name>ATP</name>
        <dbReference type="ChEBI" id="CHEBI:30616"/>
        <label>2</label>
    </ligand>
</feature>
<feature type="binding site" evidence="1">
    <location>
        <position position="781"/>
    </location>
    <ligand>
        <name>ATP</name>
        <dbReference type="ChEBI" id="CHEBI:30616"/>
        <label>2</label>
    </ligand>
</feature>
<feature type="binding site" evidence="1">
    <location>
        <position position="782"/>
    </location>
    <ligand>
        <name>ATP</name>
        <dbReference type="ChEBI" id="CHEBI:30616"/>
        <label>2</label>
    </ligand>
</feature>
<feature type="binding site" evidence="1">
    <location>
        <position position="783"/>
    </location>
    <ligand>
        <name>ATP</name>
        <dbReference type="ChEBI" id="CHEBI:30616"/>
        <label>2</label>
    </ligand>
</feature>
<feature type="binding site" evidence="1">
    <location>
        <position position="823"/>
    </location>
    <ligand>
        <name>ATP</name>
        <dbReference type="ChEBI" id="CHEBI:30616"/>
        <label>2</label>
    </ligand>
</feature>
<feature type="binding site" evidence="1">
    <location>
        <position position="823"/>
    </location>
    <ligand>
        <name>Mg(2+)</name>
        <dbReference type="ChEBI" id="CHEBI:18420"/>
        <label>3</label>
    </ligand>
</feature>
<feature type="binding site" evidence="1">
    <location>
        <position position="823"/>
    </location>
    <ligand>
        <name>Mn(2+)</name>
        <dbReference type="ChEBI" id="CHEBI:29035"/>
        <label>3</label>
    </ligand>
</feature>
<feature type="binding site" evidence="1">
    <location>
        <position position="835"/>
    </location>
    <ligand>
        <name>ATP</name>
        <dbReference type="ChEBI" id="CHEBI:30616"/>
        <label>2</label>
    </ligand>
</feature>
<feature type="binding site" evidence="1">
    <location>
        <position position="835"/>
    </location>
    <ligand>
        <name>Mg(2+)</name>
        <dbReference type="ChEBI" id="CHEBI:18420"/>
        <label>3</label>
    </ligand>
</feature>
<feature type="binding site" evidence="1">
    <location>
        <position position="835"/>
    </location>
    <ligand>
        <name>Mg(2+)</name>
        <dbReference type="ChEBI" id="CHEBI:18420"/>
        <label>4</label>
    </ligand>
</feature>
<feature type="binding site" evidence="1">
    <location>
        <position position="835"/>
    </location>
    <ligand>
        <name>Mn(2+)</name>
        <dbReference type="ChEBI" id="CHEBI:29035"/>
        <label>3</label>
    </ligand>
</feature>
<feature type="binding site" evidence="1">
    <location>
        <position position="835"/>
    </location>
    <ligand>
        <name>Mn(2+)</name>
        <dbReference type="ChEBI" id="CHEBI:29035"/>
        <label>4</label>
    </ligand>
</feature>
<feature type="binding site" evidence="1">
    <location>
        <position position="837"/>
    </location>
    <ligand>
        <name>Mg(2+)</name>
        <dbReference type="ChEBI" id="CHEBI:18420"/>
        <label>4</label>
    </ligand>
</feature>
<feature type="binding site" evidence="1">
    <location>
        <position position="837"/>
    </location>
    <ligand>
        <name>Mn(2+)</name>
        <dbReference type="ChEBI" id="CHEBI:29035"/>
        <label>4</label>
    </ligand>
</feature>
<proteinExistence type="inferred from homology"/>
<accession>C1FNY3</accession>
<evidence type="ECO:0000255" key="1">
    <source>
        <dbReference type="HAMAP-Rule" id="MF_01210"/>
    </source>
</evidence>
<comment type="function">
    <text evidence="1">Large subunit of the glutamine-dependent carbamoyl phosphate synthetase (CPSase). CPSase catalyzes the formation of carbamoyl phosphate from the ammonia moiety of glutamine, carbonate, and phosphate donated by ATP, constituting the first step of 2 biosynthetic pathways, one leading to arginine and/or urea and the other to pyrimidine nucleotides. The large subunit (synthetase) binds the substrates ammonia (free or transferred from glutamine from the small subunit), hydrogencarbonate and ATP and carries out an ATP-coupled ligase reaction, activating hydrogencarbonate by forming carboxy phosphate which reacts with ammonia to form carbamoyl phosphate.</text>
</comment>
<comment type="catalytic activity">
    <reaction evidence="1">
        <text>hydrogencarbonate + L-glutamine + 2 ATP + H2O = carbamoyl phosphate + L-glutamate + 2 ADP + phosphate + 2 H(+)</text>
        <dbReference type="Rhea" id="RHEA:18633"/>
        <dbReference type="ChEBI" id="CHEBI:15377"/>
        <dbReference type="ChEBI" id="CHEBI:15378"/>
        <dbReference type="ChEBI" id="CHEBI:17544"/>
        <dbReference type="ChEBI" id="CHEBI:29985"/>
        <dbReference type="ChEBI" id="CHEBI:30616"/>
        <dbReference type="ChEBI" id="CHEBI:43474"/>
        <dbReference type="ChEBI" id="CHEBI:58228"/>
        <dbReference type="ChEBI" id="CHEBI:58359"/>
        <dbReference type="ChEBI" id="CHEBI:456216"/>
        <dbReference type="EC" id="6.3.5.5"/>
    </reaction>
</comment>
<comment type="catalytic activity">
    <molecule>Carbamoyl phosphate synthase large chain</molecule>
    <reaction evidence="1">
        <text>hydrogencarbonate + NH4(+) + 2 ATP = carbamoyl phosphate + 2 ADP + phosphate + 2 H(+)</text>
        <dbReference type="Rhea" id="RHEA:18029"/>
        <dbReference type="ChEBI" id="CHEBI:15378"/>
        <dbReference type="ChEBI" id="CHEBI:17544"/>
        <dbReference type="ChEBI" id="CHEBI:28938"/>
        <dbReference type="ChEBI" id="CHEBI:30616"/>
        <dbReference type="ChEBI" id="CHEBI:43474"/>
        <dbReference type="ChEBI" id="CHEBI:58228"/>
        <dbReference type="ChEBI" id="CHEBI:456216"/>
        <dbReference type="EC" id="6.3.4.16"/>
    </reaction>
</comment>
<comment type="cofactor">
    <cofactor evidence="1">
        <name>Mg(2+)</name>
        <dbReference type="ChEBI" id="CHEBI:18420"/>
    </cofactor>
    <cofactor evidence="1">
        <name>Mn(2+)</name>
        <dbReference type="ChEBI" id="CHEBI:29035"/>
    </cofactor>
    <text evidence="1">Binds 4 Mg(2+) or Mn(2+) ions per subunit.</text>
</comment>
<comment type="pathway">
    <text evidence="1">Amino-acid biosynthesis; L-arginine biosynthesis; carbamoyl phosphate from bicarbonate: step 1/1.</text>
</comment>
<comment type="pathway">
    <text evidence="1">Pyrimidine metabolism; UMP biosynthesis via de novo pathway; (S)-dihydroorotate from bicarbonate: step 1/3.</text>
</comment>
<comment type="subunit">
    <text evidence="1">Composed of two chains; the small (or glutamine) chain promotes the hydrolysis of glutamine to ammonia, which is used by the large (or ammonia) chain to synthesize carbamoyl phosphate. Tetramer of heterodimers (alpha,beta)4.</text>
</comment>
<comment type="domain">
    <text evidence="1">The large subunit is composed of 2 ATP-grasp domains that are involved in binding the 2 ATP molecules needed for carbamoyl phosphate synthesis. The N-terminal ATP-grasp domain (referred to as the carboxyphosphate synthetic component) catalyzes the ATP-dependent phosphorylation of hydrogencarbonate to carboxyphosphate and the subsequent nucleophilic attack by ammonia to form a carbamate intermediate. The C-terminal ATP-grasp domain (referred to as the carbamoyl phosphate synthetic component) then catalyzes the phosphorylation of carbamate with the second ATP to form the end product carbamoyl phosphate. The reactive and unstable enzyme intermediates are sequentially channeled from one active site to the next through the interior of the protein over a distance of at least 96 A.</text>
</comment>
<comment type="similarity">
    <text evidence="1">Belongs to the CarB family.</text>
</comment>